<keyword id="KW-0227">DNA damage</keyword>
<keyword id="KW-0233">DNA recombination</keyword>
<keyword id="KW-0234">DNA repair</keyword>
<feature type="chain" id="PRO_1000012157" description="DNA repair protein RecO">
    <location>
        <begin position="1"/>
        <end position="249"/>
    </location>
</feature>
<proteinExistence type="inferred from homology"/>
<organism>
    <name type="scientific">Sinorhizobium medicae (strain WSM419)</name>
    <name type="common">Ensifer medicae</name>
    <dbReference type="NCBI Taxonomy" id="366394"/>
    <lineage>
        <taxon>Bacteria</taxon>
        <taxon>Pseudomonadati</taxon>
        <taxon>Pseudomonadota</taxon>
        <taxon>Alphaproteobacteria</taxon>
        <taxon>Hyphomicrobiales</taxon>
        <taxon>Rhizobiaceae</taxon>
        <taxon>Sinorhizobium/Ensifer group</taxon>
        <taxon>Sinorhizobium</taxon>
    </lineage>
</organism>
<protein>
    <recommendedName>
        <fullName evidence="1">DNA repair protein RecO</fullName>
    </recommendedName>
    <alternativeName>
        <fullName evidence="1">Recombination protein O</fullName>
    </alternativeName>
</protein>
<comment type="function">
    <text evidence="1">Involved in DNA repair and RecF pathway recombination.</text>
</comment>
<comment type="similarity">
    <text evidence="1">Belongs to the RecO family.</text>
</comment>
<sequence>MQWSDQAIILGIRRHGESSVIAEVMTPGHGRHLGLVRSGRSRAMQPVLQPGNSVEVVWRARLDEHLGEFRVEPLQLRAARLIETATSVYGIQALGSLLRLLPERDPHPHLYEALAVIVDHLQDPADAGELFVRFELAVLNDLGFGLDLSRCGATGARSELVYVSPKSGRAICREAGAPYAERMLALPDFLSGQNRAADHESLAAAFRLTAYFLNRHVYEPRGVDAASARDGFVHATLKALRTASSEAPQ</sequence>
<dbReference type="EMBL" id="CP000738">
    <property type="protein sequence ID" value="ABR59549.1"/>
    <property type="molecule type" value="Genomic_DNA"/>
</dbReference>
<dbReference type="RefSeq" id="WP_011974895.1">
    <property type="nucleotide sequence ID" value="NC_009636.1"/>
</dbReference>
<dbReference type="RefSeq" id="YP_001326384.1">
    <property type="nucleotide sequence ID" value="NC_009636.1"/>
</dbReference>
<dbReference type="SMR" id="A6U7B9"/>
<dbReference type="STRING" id="366394.Smed_0693"/>
<dbReference type="GeneID" id="61609969"/>
<dbReference type="KEGG" id="smd:Smed_0693"/>
<dbReference type="PATRIC" id="fig|366394.8.peg.3796"/>
<dbReference type="eggNOG" id="COG1381">
    <property type="taxonomic scope" value="Bacteria"/>
</dbReference>
<dbReference type="HOGENOM" id="CLU_086029_0_0_5"/>
<dbReference type="OrthoDB" id="9804792at2"/>
<dbReference type="Proteomes" id="UP000001108">
    <property type="component" value="Chromosome"/>
</dbReference>
<dbReference type="GO" id="GO:0043590">
    <property type="term" value="C:bacterial nucleoid"/>
    <property type="evidence" value="ECO:0007669"/>
    <property type="project" value="TreeGrafter"/>
</dbReference>
<dbReference type="GO" id="GO:0006310">
    <property type="term" value="P:DNA recombination"/>
    <property type="evidence" value="ECO:0007669"/>
    <property type="project" value="UniProtKB-UniRule"/>
</dbReference>
<dbReference type="GO" id="GO:0006302">
    <property type="term" value="P:double-strand break repair"/>
    <property type="evidence" value="ECO:0007669"/>
    <property type="project" value="TreeGrafter"/>
</dbReference>
<dbReference type="Gene3D" id="2.40.50.140">
    <property type="entry name" value="Nucleic acid-binding proteins"/>
    <property type="match status" value="1"/>
</dbReference>
<dbReference type="Gene3D" id="1.20.1440.120">
    <property type="entry name" value="Recombination protein O, C-terminal domain"/>
    <property type="match status" value="1"/>
</dbReference>
<dbReference type="HAMAP" id="MF_00201">
    <property type="entry name" value="RecO"/>
    <property type="match status" value="1"/>
</dbReference>
<dbReference type="InterPro" id="IPR037278">
    <property type="entry name" value="ARFGAP/RecO"/>
</dbReference>
<dbReference type="InterPro" id="IPR022572">
    <property type="entry name" value="DNA_rep/recomb_RecO_N"/>
</dbReference>
<dbReference type="InterPro" id="IPR012340">
    <property type="entry name" value="NA-bd_OB-fold"/>
</dbReference>
<dbReference type="InterPro" id="IPR003717">
    <property type="entry name" value="RecO"/>
</dbReference>
<dbReference type="InterPro" id="IPR042242">
    <property type="entry name" value="RecO_C"/>
</dbReference>
<dbReference type="NCBIfam" id="TIGR00613">
    <property type="entry name" value="reco"/>
    <property type="match status" value="1"/>
</dbReference>
<dbReference type="PANTHER" id="PTHR33991">
    <property type="entry name" value="DNA REPAIR PROTEIN RECO"/>
    <property type="match status" value="1"/>
</dbReference>
<dbReference type="PANTHER" id="PTHR33991:SF1">
    <property type="entry name" value="DNA REPAIR PROTEIN RECO"/>
    <property type="match status" value="1"/>
</dbReference>
<dbReference type="Pfam" id="PF02565">
    <property type="entry name" value="RecO_C"/>
    <property type="match status" value="1"/>
</dbReference>
<dbReference type="Pfam" id="PF11967">
    <property type="entry name" value="RecO_N"/>
    <property type="match status" value="1"/>
</dbReference>
<dbReference type="SUPFAM" id="SSF57863">
    <property type="entry name" value="ArfGap/RecO-like zinc finger"/>
    <property type="match status" value="1"/>
</dbReference>
<dbReference type="SUPFAM" id="SSF50249">
    <property type="entry name" value="Nucleic acid-binding proteins"/>
    <property type="match status" value="1"/>
</dbReference>
<accession>A6U7B9</accession>
<evidence type="ECO:0000255" key="1">
    <source>
        <dbReference type="HAMAP-Rule" id="MF_00201"/>
    </source>
</evidence>
<reference key="1">
    <citation type="submission" date="2007-06" db="EMBL/GenBank/DDBJ databases">
        <title>Complete sequence of Sinorhizobium medicae WSM419 chromosome.</title>
        <authorList>
            <consortium name="US DOE Joint Genome Institute"/>
            <person name="Copeland A."/>
            <person name="Lucas S."/>
            <person name="Lapidus A."/>
            <person name="Barry K."/>
            <person name="Glavina del Rio T."/>
            <person name="Dalin E."/>
            <person name="Tice H."/>
            <person name="Pitluck S."/>
            <person name="Chain P."/>
            <person name="Malfatti S."/>
            <person name="Shin M."/>
            <person name="Vergez L."/>
            <person name="Schmutz J."/>
            <person name="Larimer F."/>
            <person name="Land M."/>
            <person name="Hauser L."/>
            <person name="Kyrpides N."/>
            <person name="Mikhailova N."/>
            <person name="Reeve W.G."/>
            <person name="Richardson P."/>
        </authorList>
    </citation>
    <scope>NUCLEOTIDE SEQUENCE [LARGE SCALE GENOMIC DNA]</scope>
    <source>
        <strain>WSM419</strain>
    </source>
</reference>
<gene>
    <name evidence="1" type="primary">recO</name>
    <name type="ordered locus">Smed_0693</name>
</gene>
<name>RECO_SINMW</name>